<evidence type="ECO:0000255" key="1">
    <source>
        <dbReference type="HAMAP-Rule" id="MF_01532"/>
    </source>
</evidence>
<feature type="chain" id="PRO_1000193746" description="L-rhamnose-proton symporter">
    <location>
        <begin position="1"/>
        <end position="344"/>
    </location>
</feature>
<feature type="transmembrane region" description="Helical" evidence="1">
    <location>
        <begin position="4"/>
        <end position="24"/>
    </location>
</feature>
<feature type="transmembrane region" description="Helical" evidence="1">
    <location>
        <begin position="38"/>
        <end position="58"/>
    </location>
</feature>
<feature type="transmembrane region" description="Helical" evidence="1">
    <location>
        <begin position="68"/>
        <end position="88"/>
    </location>
</feature>
<feature type="transmembrane region" description="Helical" evidence="1">
    <location>
        <begin position="101"/>
        <end position="121"/>
    </location>
</feature>
<feature type="transmembrane region" description="Helical" evidence="1">
    <location>
        <begin position="137"/>
        <end position="157"/>
    </location>
</feature>
<feature type="transmembrane region" description="Helical" evidence="1">
    <location>
        <begin position="175"/>
        <end position="195"/>
    </location>
</feature>
<feature type="transmembrane region" description="Helical" evidence="1">
    <location>
        <begin position="214"/>
        <end position="234"/>
    </location>
</feature>
<feature type="transmembrane region" description="Helical" evidence="1">
    <location>
        <begin position="259"/>
        <end position="279"/>
    </location>
</feature>
<feature type="transmembrane region" description="Helical" evidence="1">
    <location>
        <begin position="290"/>
        <end position="310"/>
    </location>
</feature>
<feature type="transmembrane region" description="Helical" evidence="1">
    <location>
        <begin position="323"/>
        <end position="343"/>
    </location>
</feature>
<dbReference type="EMBL" id="CU928161">
    <property type="protein sequence ID" value="CAR05538.1"/>
    <property type="molecule type" value="Genomic_DNA"/>
</dbReference>
<dbReference type="RefSeq" id="WP_000063507.1">
    <property type="nucleotide sequence ID" value="NC_011742.1"/>
</dbReference>
<dbReference type="GeneID" id="75174148"/>
<dbReference type="KEGG" id="ecz:ECS88_4357"/>
<dbReference type="HOGENOM" id="CLU_066437_0_0_6"/>
<dbReference type="Proteomes" id="UP000000747">
    <property type="component" value="Chromosome"/>
</dbReference>
<dbReference type="GO" id="GO:0005886">
    <property type="term" value="C:plasma membrane"/>
    <property type="evidence" value="ECO:0007669"/>
    <property type="project" value="UniProtKB-SubCell"/>
</dbReference>
<dbReference type="GO" id="GO:0015153">
    <property type="term" value="F:rhamnose transmembrane transporter activity"/>
    <property type="evidence" value="ECO:0007669"/>
    <property type="project" value="UniProtKB-UniRule"/>
</dbReference>
<dbReference type="GO" id="GO:0015293">
    <property type="term" value="F:symporter activity"/>
    <property type="evidence" value="ECO:0007669"/>
    <property type="project" value="UniProtKB-KW"/>
</dbReference>
<dbReference type="HAMAP" id="MF_01532">
    <property type="entry name" value="RhaT"/>
    <property type="match status" value="1"/>
</dbReference>
<dbReference type="InterPro" id="IPR004673">
    <property type="entry name" value="L-rhamnose-proton_sym_RhaT"/>
</dbReference>
<dbReference type="NCBIfam" id="NF010021">
    <property type="entry name" value="PRK13499.1-1"/>
    <property type="match status" value="1"/>
</dbReference>
<dbReference type="NCBIfam" id="NF010023">
    <property type="entry name" value="PRK13499.1-3"/>
    <property type="match status" value="1"/>
</dbReference>
<dbReference type="NCBIfam" id="TIGR00776">
    <property type="entry name" value="RhaT"/>
    <property type="match status" value="1"/>
</dbReference>
<dbReference type="Pfam" id="PF06379">
    <property type="entry name" value="RhaT"/>
    <property type="match status" value="1"/>
</dbReference>
<organism>
    <name type="scientific">Escherichia coli O45:K1 (strain S88 / ExPEC)</name>
    <dbReference type="NCBI Taxonomy" id="585035"/>
    <lineage>
        <taxon>Bacteria</taxon>
        <taxon>Pseudomonadati</taxon>
        <taxon>Pseudomonadota</taxon>
        <taxon>Gammaproteobacteria</taxon>
        <taxon>Enterobacterales</taxon>
        <taxon>Enterobacteriaceae</taxon>
        <taxon>Escherichia</taxon>
    </lineage>
</organism>
<gene>
    <name evidence="1" type="primary">rhaT</name>
    <name type="ordered locus">ECS88_4357</name>
</gene>
<accession>B7MI40</accession>
<name>RHAT_ECO45</name>
<protein>
    <recommendedName>
        <fullName evidence="1">L-rhamnose-proton symporter</fullName>
    </recommendedName>
    <alternativeName>
        <fullName evidence="1">L-rhamnose-H(+) transport protein</fullName>
    </alternativeName>
</protein>
<reference key="1">
    <citation type="journal article" date="2009" name="PLoS Genet.">
        <title>Organised genome dynamics in the Escherichia coli species results in highly diverse adaptive paths.</title>
        <authorList>
            <person name="Touchon M."/>
            <person name="Hoede C."/>
            <person name="Tenaillon O."/>
            <person name="Barbe V."/>
            <person name="Baeriswyl S."/>
            <person name="Bidet P."/>
            <person name="Bingen E."/>
            <person name="Bonacorsi S."/>
            <person name="Bouchier C."/>
            <person name="Bouvet O."/>
            <person name="Calteau A."/>
            <person name="Chiapello H."/>
            <person name="Clermont O."/>
            <person name="Cruveiller S."/>
            <person name="Danchin A."/>
            <person name="Diard M."/>
            <person name="Dossat C."/>
            <person name="Karoui M.E."/>
            <person name="Frapy E."/>
            <person name="Garry L."/>
            <person name="Ghigo J.M."/>
            <person name="Gilles A.M."/>
            <person name="Johnson J."/>
            <person name="Le Bouguenec C."/>
            <person name="Lescat M."/>
            <person name="Mangenot S."/>
            <person name="Martinez-Jehanne V."/>
            <person name="Matic I."/>
            <person name="Nassif X."/>
            <person name="Oztas S."/>
            <person name="Petit M.A."/>
            <person name="Pichon C."/>
            <person name="Rouy Z."/>
            <person name="Ruf C.S."/>
            <person name="Schneider D."/>
            <person name="Tourret J."/>
            <person name="Vacherie B."/>
            <person name="Vallenet D."/>
            <person name="Medigue C."/>
            <person name="Rocha E.P.C."/>
            <person name="Denamur E."/>
        </authorList>
    </citation>
    <scope>NUCLEOTIDE SEQUENCE [LARGE SCALE GENOMIC DNA]</scope>
    <source>
        <strain>S88 / ExPEC</strain>
    </source>
</reference>
<sequence>MSNAITMGIFWHLIGAASAACFYAPFKKVKKWSWETMWSVGGIVSWIILPWAISALLLPNFWAYYSSFSLSTLLPVFLFGAMWGIGNINYGLTMRYLGMSMGIGIAIGITLIVGTLMTPIINGNFDVLINTEGGRMTLLGVLVALIGVGIVTRAGQLKERKMGIKAEEFNLKKGLVLAVMCGIFSAGMSFAMNAAKPMHEAAAALGVDPLYVALPSYVVIMGGGAIINLGFCFIRLAKVKDLSLKADFSLAKPLIIHNVLLSALGGLMWYLQFFFYAWGHARIPAQYDYISWMLHMSFYVLCGGIVGLVLKEWNNAGRRPVTVLSLGCVVIIVAANIVGIGMAN</sequence>
<proteinExistence type="inferred from homology"/>
<comment type="function">
    <text evidence="1">Uptake of L-rhamnose across the cytoplasmic membrane with the concomitant transport of protons into the cell (symport system).</text>
</comment>
<comment type="catalytic activity">
    <reaction evidence="1">
        <text>L-rhamnopyranose(in) + H(+)(in) = L-rhamnopyranose(out) + H(+)(out)</text>
        <dbReference type="Rhea" id="RHEA:29947"/>
        <dbReference type="ChEBI" id="CHEBI:15378"/>
        <dbReference type="ChEBI" id="CHEBI:62346"/>
    </reaction>
    <physiologicalReaction direction="right-to-left" evidence="1">
        <dbReference type="Rhea" id="RHEA:29949"/>
    </physiologicalReaction>
</comment>
<comment type="subcellular location">
    <subcellularLocation>
        <location evidence="1">Cell inner membrane</location>
        <topology evidence="1">Multi-pass membrane protein</topology>
    </subcellularLocation>
</comment>
<comment type="similarity">
    <text evidence="1">Belongs to the L-rhamnose transporter (TC 2.A.7.6) family.</text>
</comment>
<keyword id="KW-0997">Cell inner membrane</keyword>
<keyword id="KW-1003">Cell membrane</keyword>
<keyword id="KW-0472">Membrane</keyword>
<keyword id="KW-1185">Reference proteome</keyword>
<keyword id="KW-0762">Sugar transport</keyword>
<keyword id="KW-0769">Symport</keyword>
<keyword id="KW-0812">Transmembrane</keyword>
<keyword id="KW-1133">Transmembrane helix</keyword>
<keyword id="KW-0813">Transport</keyword>